<evidence type="ECO:0000305" key="1"/>
<sequence>MDIWRPEIKYLRYTNGFNVSELEDACFKFNYKFPKVGYCRVPSHAWCRNQGSFCATLTLYGKSKHYDKYFGVITGFTAFANTVEEAVNKLVFLAVDFITWRRQELNVYG</sequence>
<gene>
    <name type="ORF">5a</name>
</gene>
<organism>
    <name type="scientific">Bovine coronavirus (strain LY-138)</name>
    <name type="common">BCoV</name>
    <name type="synonym">BCV</name>
    <dbReference type="NCBI Taxonomy" id="11131"/>
    <lineage>
        <taxon>Viruses</taxon>
        <taxon>Riboviria</taxon>
        <taxon>Orthornavirae</taxon>
        <taxon>Pisuviricota</taxon>
        <taxon>Pisoniviricetes</taxon>
        <taxon>Nidovirales</taxon>
        <taxon>Cornidovirineae</taxon>
        <taxon>Coronaviridae</taxon>
        <taxon>Orthocoronavirinae</taxon>
        <taxon>Betacoronavirus</taxon>
        <taxon>Embecovirus</taxon>
        <taxon>Betacoronavirus 1</taxon>
    </lineage>
</organism>
<name>NS12_CVBLY</name>
<accession>Q77WY2</accession>
<feature type="chain" id="PRO_0000283951" description="Non-structural protein of 12.7 kDa">
    <location>
        <begin position="1"/>
        <end position="109"/>
    </location>
</feature>
<comment type="similarity">
    <text evidence="1">Belongs to the coronaviruses ns12.7 protein family.</text>
</comment>
<protein>
    <recommendedName>
        <fullName>Non-structural protein of 12.7 kDa</fullName>
        <shortName>ns12.7</shortName>
    </recommendedName>
    <alternativeName>
        <fullName>12.7 kDa accessory protein</fullName>
    </alternativeName>
</protein>
<reference key="1">
    <citation type="journal article" date="1998" name="Virus Genes">
        <title>Nucleotide and predicted amino acid sequences of all genes encoded by the 3' genomic portion (9.5 kb) of respiratory bovine coronaviruses and comparisons among respiratory and enteric coronaviruses.</title>
        <authorList>
            <person name="Chouljenko V.N."/>
            <person name="Kousoulas K.G."/>
            <person name="Lin X.Q."/>
            <person name="Storz J."/>
        </authorList>
    </citation>
    <scope>NUCLEOTIDE SEQUENCE [GENOMIC RNA]</scope>
</reference>
<dbReference type="EMBL" id="AF058942">
    <property type="protein sequence ID" value="AAF25502.1"/>
    <property type="molecule type" value="Genomic_RNA"/>
</dbReference>
<dbReference type="InterPro" id="IPR006841">
    <property type="entry name" value="Corona_NS2"/>
</dbReference>
<dbReference type="Pfam" id="PF04753">
    <property type="entry name" value="Corona_NS12-7"/>
    <property type="match status" value="1"/>
</dbReference>
<proteinExistence type="inferred from homology"/>
<organismHost>
    <name type="scientific">Bos taurus</name>
    <name type="common">Bovine</name>
    <dbReference type="NCBI Taxonomy" id="9913"/>
</organismHost>